<evidence type="ECO:0000250" key="1">
    <source>
        <dbReference type="UniProtKB" id="Q9DB60"/>
    </source>
</evidence>
<evidence type="ECO:0000303" key="2">
    <source>
    </source>
</evidence>
<evidence type="ECO:0000305" key="3"/>
<evidence type="ECO:0000312" key="4">
    <source>
        <dbReference type="HGNC" id="HGNC:28390"/>
    </source>
</evidence>
<evidence type="ECO:0007744" key="5">
    <source>
    </source>
</evidence>
<dbReference type="EC" id="1.11.1.20" evidence="1"/>
<dbReference type="EMBL" id="AK057027">
    <property type="protein sequence ID" value="BAG51845.1"/>
    <property type="molecule type" value="mRNA"/>
</dbReference>
<dbReference type="EMBL" id="AK075273">
    <property type="protein sequence ID" value="BAC11511.1"/>
    <property type="molecule type" value="mRNA"/>
</dbReference>
<dbReference type="EMBL" id="AK291908">
    <property type="protein sequence ID" value="BAF84597.1"/>
    <property type="molecule type" value="mRNA"/>
</dbReference>
<dbReference type="EMBL" id="AK298926">
    <property type="protein sequence ID" value="BAG61031.1"/>
    <property type="molecule type" value="mRNA"/>
</dbReference>
<dbReference type="EMBL" id="AK303504">
    <property type="protein sequence ID" value="BAG64537.1"/>
    <property type="molecule type" value="mRNA"/>
</dbReference>
<dbReference type="EMBL" id="AK316243">
    <property type="protein sequence ID" value="BAH14614.1"/>
    <property type="molecule type" value="mRNA"/>
</dbReference>
<dbReference type="EMBL" id="AF425266">
    <property type="protein sequence ID" value="AAP97295.1"/>
    <property type="molecule type" value="mRNA"/>
</dbReference>
<dbReference type="EMBL" id="AL139246">
    <property type="status" value="NOT_ANNOTATED_CDS"/>
    <property type="molecule type" value="Genomic_DNA"/>
</dbReference>
<dbReference type="EMBL" id="CH471183">
    <property type="protein sequence ID" value="EAW56086.1"/>
    <property type="molecule type" value="Genomic_DNA"/>
</dbReference>
<dbReference type="EMBL" id="CH471183">
    <property type="protein sequence ID" value="EAW56087.1"/>
    <property type="molecule type" value="Genomic_DNA"/>
</dbReference>
<dbReference type="EMBL" id="CH471183">
    <property type="protein sequence ID" value="EAW56088.1"/>
    <property type="molecule type" value="Genomic_DNA"/>
</dbReference>
<dbReference type="EMBL" id="BC022547">
    <property type="protein sequence ID" value="AAH22547.1"/>
    <property type="molecule type" value="mRNA"/>
</dbReference>
<dbReference type="CCDS" id="CCDS44.3">
    <molecule id="Q8TBF2-1"/>
</dbReference>
<dbReference type="CCDS" id="CCDS72690.1">
    <molecule id="Q8TBF2-3"/>
</dbReference>
<dbReference type="CCDS" id="CCDS72691.1">
    <molecule id="Q8TBF2-4"/>
</dbReference>
<dbReference type="CCDS" id="CCDS90843.1">
    <molecule id="Q8TBF2-2"/>
</dbReference>
<dbReference type="RefSeq" id="NP_001182665.1">
    <molecule id="Q8TBF2-3"/>
    <property type="nucleotide sequence ID" value="NM_001195736.1"/>
</dbReference>
<dbReference type="RefSeq" id="NP_001182666.1">
    <molecule id="Q8TBF2-6"/>
    <property type="nucleotide sequence ID" value="NM_001195737.1"/>
</dbReference>
<dbReference type="RefSeq" id="NP_001182667.1">
    <molecule id="Q8TBF2-2"/>
    <property type="nucleotide sequence ID" value="NM_001195738.1"/>
</dbReference>
<dbReference type="RefSeq" id="NP_001182669.1">
    <molecule id="Q8TBF2-4"/>
    <property type="nucleotide sequence ID" value="NM_001195740.1"/>
</dbReference>
<dbReference type="RefSeq" id="NP_001182670.1">
    <property type="nucleotide sequence ID" value="NM_001195741.1"/>
</dbReference>
<dbReference type="RefSeq" id="NP_689584.2">
    <molecule id="Q8TBF2-1"/>
    <property type="nucleotide sequence ID" value="NM_152371.3"/>
</dbReference>
<dbReference type="SMR" id="Q8TBF2"/>
<dbReference type="BioGRID" id="126049">
    <property type="interactions" value="21"/>
</dbReference>
<dbReference type="FunCoup" id="Q8TBF2">
    <property type="interactions" value="107"/>
</dbReference>
<dbReference type="IntAct" id="Q8TBF2">
    <property type="interactions" value="9"/>
</dbReference>
<dbReference type="MINT" id="Q8TBF2"/>
<dbReference type="STRING" id="9606.ENSP00000413218"/>
<dbReference type="iPTMnet" id="Q8TBF2"/>
<dbReference type="PhosphoSitePlus" id="Q8TBF2"/>
<dbReference type="BioMuta" id="FAM213B"/>
<dbReference type="DMDM" id="74760424"/>
<dbReference type="jPOST" id="Q8TBF2"/>
<dbReference type="MassIVE" id="Q8TBF2"/>
<dbReference type="PaxDb" id="9606-ENSP00000413218"/>
<dbReference type="PeptideAtlas" id="Q8TBF2"/>
<dbReference type="ProteomicsDB" id="74003">
    <molecule id="Q8TBF2-1"/>
</dbReference>
<dbReference type="ProteomicsDB" id="74004">
    <molecule id="Q8TBF2-2"/>
</dbReference>
<dbReference type="ProteomicsDB" id="74005">
    <molecule id="Q8TBF2-3"/>
</dbReference>
<dbReference type="ProteomicsDB" id="74006">
    <molecule id="Q8TBF2-4"/>
</dbReference>
<dbReference type="ProteomicsDB" id="74008">
    <molecule id="Q8TBF2-6"/>
</dbReference>
<dbReference type="ProteomicsDB" id="74009">
    <molecule id="Q8TBF2-7"/>
</dbReference>
<dbReference type="Pumba" id="Q8TBF2"/>
<dbReference type="Antibodypedia" id="1625">
    <property type="antibodies" value="68 antibodies from 16 providers"/>
</dbReference>
<dbReference type="DNASU" id="127281"/>
<dbReference type="Ensembl" id="ENST00000378424.9">
    <molecule id="Q8TBF2-7"/>
    <property type="protein sequence ID" value="ENSP00000367681.5"/>
    <property type="gene ID" value="ENSG00000157870.17"/>
</dbReference>
<dbReference type="Ensembl" id="ENST00000378427.6">
    <molecule id="Q8TBF2-2"/>
    <property type="protein sequence ID" value="ENSP00000367684.2"/>
    <property type="gene ID" value="ENSG00000157870.17"/>
</dbReference>
<dbReference type="Ensembl" id="ENST00000419916.8">
    <molecule id="Q8TBF2-1"/>
    <property type="protein sequence ID" value="ENSP00000394405.4"/>
    <property type="gene ID" value="ENSG00000157870.17"/>
</dbReference>
<dbReference type="GeneID" id="127281"/>
<dbReference type="KEGG" id="hsa:127281"/>
<dbReference type="MANE-Select" id="ENST00000419916.8">
    <property type="protein sequence ID" value="ENSP00000394405.4"/>
    <property type="RefSeq nucleotide sequence ID" value="NM_152371.5"/>
    <property type="RefSeq protein sequence ID" value="NP_689584.5"/>
</dbReference>
<dbReference type="UCSC" id="uc001aju.4">
    <molecule id="Q8TBF2-1"/>
    <property type="organism name" value="human"/>
</dbReference>
<dbReference type="AGR" id="HGNC:28390"/>
<dbReference type="CTD" id="127281"/>
<dbReference type="DisGeNET" id="127281"/>
<dbReference type="GeneCards" id="PRXL2B"/>
<dbReference type="HGNC" id="HGNC:28390">
    <property type="gene designation" value="PRXL2B"/>
</dbReference>
<dbReference type="HPA" id="ENSG00000157870">
    <property type="expression patterns" value="Tissue enhanced (brain)"/>
</dbReference>
<dbReference type="neXtProt" id="NX_Q8TBF2"/>
<dbReference type="OpenTargets" id="ENSG00000157870"/>
<dbReference type="PharmGKB" id="PA142672477"/>
<dbReference type="VEuPathDB" id="HostDB:ENSG00000157870"/>
<dbReference type="eggNOG" id="KOG4498">
    <property type="taxonomic scope" value="Eukaryota"/>
</dbReference>
<dbReference type="GeneTree" id="ENSGT00940000162566"/>
<dbReference type="HOGENOM" id="CLU_094994_0_0_1"/>
<dbReference type="InParanoid" id="Q8TBF2"/>
<dbReference type="OMA" id="QRPVCND"/>
<dbReference type="OrthoDB" id="40334at2759"/>
<dbReference type="PAN-GO" id="Q8TBF2">
    <property type="GO annotations" value="1 GO annotation based on evolutionary models"/>
</dbReference>
<dbReference type="PhylomeDB" id="Q8TBF2"/>
<dbReference type="TreeFam" id="TF313804"/>
<dbReference type="PathwayCommons" id="Q8TBF2"/>
<dbReference type="Reactome" id="R-HSA-2162123">
    <property type="pathway name" value="Synthesis of Prostaglandins (PG) and Thromboxanes (TX)"/>
</dbReference>
<dbReference type="SignaLink" id="Q8TBF2"/>
<dbReference type="BioGRID-ORCS" id="127281">
    <property type="hits" value="13 hits in 1152 CRISPR screens"/>
</dbReference>
<dbReference type="ChiTaRS" id="FAM213B">
    <property type="organism name" value="human"/>
</dbReference>
<dbReference type="GenomeRNAi" id="127281"/>
<dbReference type="Pharos" id="Q8TBF2">
    <property type="development level" value="Tdark"/>
</dbReference>
<dbReference type="PRO" id="PR:Q8TBF2"/>
<dbReference type="Proteomes" id="UP000005640">
    <property type="component" value="Chromosome 1"/>
</dbReference>
<dbReference type="RNAct" id="Q8TBF2">
    <property type="molecule type" value="protein"/>
</dbReference>
<dbReference type="Bgee" id="ENSG00000157870">
    <property type="expression patterns" value="Expressed in mucosa of transverse colon and 95 other cell types or tissues"/>
</dbReference>
<dbReference type="ExpressionAtlas" id="Q8TBF2">
    <property type="expression patterns" value="baseline and differential"/>
</dbReference>
<dbReference type="GO" id="GO:0005737">
    <property type="term" value="C:cytoplasm"/>
    <property type="evidence" value="ECO:0000250"/>
    <property type="project" value="CAFA"/>
</dbReference>
<dbReference type="GO" id="GO:0005829">
    <property type="term" value="C:cytosol"/>
    <property type="evidence" value="ECO:0007669"/>
    <property type="project" value="UniProtKB-SubCell"/>
</dbReference>
<dbReference type="GO" id="GO:0005783">
    <property type="term" value="C:endoplasmic reticulum"/>
    <property type="evidence" value="ECO:0000250"/>
    <property type="project" value="CAFA"/>
</dbReference>
<dbReference type="GO" id="GO:0070062">
    <property type="term" value="C:extracellular exosome"/>
    <property type="evidence" value="ECO:0007005"/>
    <property type="project" value="UniProtKB"/>
</dbReference>
<dbReference type="GO" id="GO:0005739">
    <property type="term" value="C:mitochondrion"/>
    <property type="evidence" value="ECO:0006056"/>
    <property type="project" value="FlyBase"/>
</dbReference>
<dbReference type="GO" id="GO:0043209">
    <property type="term" value="C:myelin sheath"/>
    <property type="evidence" value="ECO:0000250"/>
    <property type="project" value="CAFA"/>
</dbReference>
<dbReference type="GO" id="GO:0016616">
    <property type="term" value="F:oxidoreductase activity, acting on the CH-OH group of donors, NAD or NADP as acceptor"/>
    <property type="evidence" value="ECO:0000250"/>
    <property type="project" value="UniProtKB"/>
</dbReference>
<dbReference type="GO" id="GO:0047017">
    <property type="term" value="F:prostaglandin F synthase activity"/>
    <property type="evidence" value="ECO:0000250"/>
    <property type="project" value="CAFA"/>
</dbReference>
<dbReference type="GO" id="GO:0001516">
    <property type="term" value="P:prostaglandin biosynthetic process"/>
    <property type="evidence" value="ECO:0000250"/>
    <property type="project" value="UniProtKB"/>
</dbReference>
<dbReference type="CDD" id="cd02970">
    <property type="entry name" value="PRX_like2"/>
    <property type="match status" value="1"/>
</dbReference>
<dbReference type="FunFam" id="3.40.30.10:FF:000243">
    <property type="entry name" value="Prostamide/prostaglandin F synthase"/>
    <property type="match status" value="1"/>
</dbReference>
<dbReference type="InterPro" id="IPR032801">
    <property type="entry name" value="PXL2A/B/C"/>
</dbReference>
<dbReference type="InterPro" id="IPR036249">
    <property type="entry name" value="Thioredoxin-like_sf"/>
</dbReference>
<dbReference type="PANTHER" id="PTHR28630">
    <property type="match status" value="1"/>
</dbReference>
<dbReference type="PANTHER" id="PTHR28630:SF29">
    <property type="entry name" value="PROSTAMIDE_PROSTAGLANDIN F SYNTHASE"/>
    <property type="match status" value="1"/>
</dbReference>
<dbReference type="Pfam" id="PF13911">
    <property type="entry name" value="AhpC-TSA_2"/>
    <property type="match status" value="1"/>
</dbReference>
<dbReference type="SUPFAM" id="SSF52833">
    <property type="entry name" value="Thioredoxin-like"/>
    <property type="match status" value="1"/>
</dbReference>
<feature type="chain" id="PRO_0000284637" description="Prostamide/prostaglandin F synthase">
    <location>
        <begin position="1"/>
        <end position="198"/>
    </location>
</feature>
<feature type="modified residue" description="Phosphotyrosine" evidence="5">
    <location>
        <position position="108"/>
    </location>
</feature>
<feature type="splice variant" id="VSP_040901" description="In isoform 3 and isoform 6." evidence="2">
    <original>K</original>
    <variation>KRLWTQASPEFGQATWCLR</variation>
    <location>
        <position position="106"/>
    </location>
</feature>
<feature type="splice variant" id="VSP_040903" description="In isoform 4." evidence="2">
    <location>
        <begin position="129"/>
        <end position="164"/>
    </location>
</feature>
<feature type="splice variant" id="VSP_040904" description="In isoform 5." evidence="2">
    <original>KAVGIQGNLSGDLLQSGGLLVVSKGGDKVLLHFVQ</original>
    <variation>VPTPDRPRLLASRGTCLGTCCRAEGCWWSAK</variation>
    <location>
        <begin position="130"/>
        <end position="164"/>
    </location>
</feature>
<feature type="splice variant" id="VSP_024581" description="In isoform 2 and isoform 6." evidence="2">
    <original>GGDKVLLHFVQKSPGDYVPKEHILQVLGISAEVCASDPPQCDREV</original>
    <variation>EVPRRLRPQGAHPAGPGHLCGGLCQRPASV</variation>
    <location>
        <begin position="154"/>
        <end position="198"/>
    </location>
</feature>
<proteinExistence type="evidence at protein level"/>
<reference key="1">
    <citation type="journal article" date="2004" name="Nat. Genet.">
        <title>Complete sequencing and characterization of 21,243 full-length human cDNAs.</title>
        <authorList>
            <person name="Ota T."/>
            <person name="Suzuki Y."/>
            <person name="Nishikawa T."/>
            <person name="Otsuki T."/>
            <person name="Sugiyama T."/>
            <person name="Irie R."/>
            <person name="Wakamatsu A."/>
            <person name="Hayashi K."/>
            <person name="Sato H."/>
            <person name="Nagai K."/>
            <person name="Kimura K."/>
            <person name="Makita H."/>
            <person name="Sekine M."/>
            <person name="Obayashi M."/>
            <person name="Nishi T."/>
            <person name="Shibahara T."/>
            <person name="Tanaka T."/>
            <person name="Ishii S."/>
            <person name="Yamamoto J."/>
            <person name="Saito K."/>
            <person name="Kawai Y."/>
            <person name="Isono Y."/>
            <person name="Nakamura Y."/>
            <person name="Nagahari K."/>
            <person name="Murakami K."/>
            <person name="Yasuda T."/>
            <person name="Iwayanagi T."/>
            <person name="Wagatsuma M."/>
            <person name="Shiratori A."/>
            <person name="Sudo H."/>
            <person name="Hosoiri T."/>
            <person name="Kaku Y."/>
            <person name="Kodaira H."/>
            <person name="Kondo H."/>
            <person name="Sugawara M."/>
            <person name="Takahashi M."/>
            <person name="Kanda K."/>
            <person name="Yokoi T."/>
            <person name="Furuya T."/>
            <person name="Kikkawa E."/>
            <person name="Omura Y."/>
            <person name="Abe K."/>
            <person name="Kamihara K."/>
            <person name="Katsuta N."/>
            <person name="Sato K."/>
            <person name="Tanikawa M."/>
            <person name="Yamazaki M."/>
            <person name="Ninomiya K."/>
            <person name="Ishibashi T."/>
            <person name="Yamashita H."/>
            <person name="Murakawa K."/>
            <person name="Fujimori K."/>
            <person name="Tanai H."/>
            <person name="Kimata M."/>
            <person name="Watanabe M."/>
            <person name="Hiraoka S."/>
            <person name="Chiba Y."/>
            <person name="Ishida S."/>
            <person name="Ono Y."/>
            <person name="Takiguchi S."/>
            <person name="Watanabe S."/>
            <person name="Yosida M."/>
            <person name="Hotuta T."/>
            <person name="Kusano J."/>
            <person name="Kanehori K."/>
            <person name="Takahashi-Fujii A."/>
            <person name="Hara H."/>
            <person name="Tanase T.-O."/>
            <person name="Nomura Y."/>
            <person name="Togiya S."/>
            <person name="Komai F."/>
            <person name="Hara R."/>
            <person name="Takeuchi K."/>
            <person name="Arita M."/>
            <person name="Imose N."/>
            <person name="Musashino K."/>
            <person name="Yuuki H."/>
            <person name="Oshima A."/>
            <person name="Sasaki N."/>
            <person name="Aotsuka S."/>
            <person name="Yoshikawa Y."/>
            <person name="Matsunawa H."/>
            <person name="Ichihara T."/>
            <person name="Shiohata N."/>
            <person name="Sano S."/>
            <person name="Moriya S."/>
            <person name="Momiyama H."/>
            <person name="Satoh N."/>
            <person name="Takami S."/>
            <person name="Terashima Y."/>
            <person name="Suzuki O."/>
            <person name="Nakagawa S."/>
            <person name="Senoh A."/>
            <person name="Mizoguchi H."/>
            <person name="Goto Y."/>
            <person name="Shimizu F."/>
            <person name="Wakebe H."/>
            <person name="Hishigaki H."/>
            <person name="Watanabe T."/>
            <person name="Sugiyama A."/>
            <person name="Takemoto M."/>
            <person name="Kawakami B."/>
            <person name="Yamazaki M."/>
            <person name="Watanabe K."/>
            <person name="Kumagai A."/>
            <person name="Itakura S."/>
            <person name="Fukuzumi Y."/>
            <person name="Fujimori Y."/>
            <person name="Komiyama M."/>
            <person name="Tashiro H."/>
            <person name="Tanigami A."/>
            <person name="Fujiwara T."/>
            <person name="Ono T."/>
            <person name="Yamada K."/>
            <person name="Fujii Y."/>
            <person name="Ozaki K."/>
            <person name="Hirao M."/>
            <person name="Ohmori Y."/>
            <person name="Kawabata A."/>
            <person name="Hikiji T."/>
            <person name="Kobatake N."/>
            <person name="Inagaki H."/>
            <person name="Ikema Y."/>
            <person name="Okamoto S."/>
            <person name="Okitani R."/>
            <person name="Kawakami T."/>
            <person name="Noguchi S."/>
            <person name="Itoh T."/>
            <person name="Shigeta K."/>
            <person name="Senba T."/>
            <person name="Matsumura K."/>
            <person name="Nakajima Y."/>
            <person name="Mizuno T."/>
            <person name="Morinaga M."/>
            <person name="Sasaki M."/>
            <person name="Togashi T."/>
            <person name="Oyama M."/>
            <person name="Hata H."/>
            <person name="Watanabe M."/>
            <person name="Komatsu T."/>
            <person name="Mizushima-Sugano J."/>
            <person name="Satoh T."/>
            <person name="Shirai Y."/>
            <person name="Takahashi Y."/>
            <person name="Nakagawa K."/>
            <person name="Okumura K."/>
            <person name="Nagase T."/>
            <person name="Nomura N."/>
            <person name="Kikuchi H."/>
            <person name="Masuho Y."/>
            <person name="Yamashita R."/>
            <person name="Nakai K."/>
            <person name="Yada T."/>
            <person name="Nakamura Y."/>
            <person name="Ohara O."/>
            <person name="Isogai T."/>
            <person name="Sugano S."/>
        </authorList>
    </citation>
    <scope>NUCLEOTIDE SEQUENCE [LARGE SCALE MRNA] (ISOFORMS 2; 3; 4 AND 6)</scope>
    <source>
        <tissue>Neuroepithelioma</tissue>
        <tissue>Teratocarcinoma</tissue>
        <tissue>Thymus</tissue>
        <tissue>Thyroid</tissue>
    </source>
</reference>
<reference key="2">
    <citation type="submission" date="2001-09" db="EMBL/GenBank/DDBJ databases">
        <authorList>
            <person name="Guo J.H."/>
            <person name="She X.Y."/>
            <person name="Yu L."/>
        </authorList>
    </citation>
    <scope>NUCLEOTIDE SEQUENCE [LARGE SCALE MRNA] (ISOFORM 1)</scope>
</reference>
<reference key="3">
    <citation type="journal article" date="2006" name="Nature">
        <title>The DNA sequence and biological annotation of human chromosome 1.</title>
        <authorList>
            <person name="Gregory S.G."/>
            <person name="Barlow K.F."/>
            <person name="McLay K.E."/>
            <person name="Kaul R."/>
            <person name="Swarbreck D."/>
            <person name="Dunham A."/>
            <person name="Scott C.E."/>
            <person name="Howe K.L."/>
            <person name="Woodfine K."/>
            <person name="Spencer C.C.A."/>
            <person name="Jones M.C."/>
            <person name="Gillson C."/>
            <person name="Searle S."/>
            <person name="Zhou Y."/>
            <person name="Kokocinski F."/>
            <person name="McDonald L."/>
            <person name="Evans R."/>
            <person name="Phillips K."/>
            <person name="Atkinson A."/>
            <person name="Cooper R."/>
            <person name="Jones C."/>
            <person name="Hall R.E."/>
            <person name="Andrews T.D."/>
            <person name="Lloyd C."/>
            <person name="Ainscough R."/>
            <person name="Almeida J.P."/>
            <person name="Ambrose K.D."/>
            <person name="Anderson F."/>
            <person name="Andrew R.W."/>
            <person name="Ashwell R.I.S."/>
            <person name="Aubin K."/>
            <person name="Babbage A.K."/>
            <person name="Bagguley C.L."/>
            <person name="Bailey J."/>
            <person name="Beasley H."/>
            <person name="Bethel G."/>
            <person name="Bird C.P."/>
            <person name="Bray-Allen S."/>
            <person name="Brown J.Y."/>
            <person name="Brown A.J."/>
            <person name="Buckley D."/>
            <person name="Burton J."/>
            <person name="Bye J."/>
            <person name="Carder C."/>
            <person name="Chapman J.C."/>
            <person name="Clark S.Y."/>
            <person name="Clarke G."/>
            <person name="Clee C."/>
            <person name="Cobley V."/>
            <person name="Collier R.E."/>
            <person name="Corby N."/>
            <person name="Coville G.J."/>
            <person name="Davies J."/>
            <person name="Deadman R."/>
            <person name="Dunn M."/>
            <person name="Earthrowl M."/>
            <person name="Ellington A.G."/>
            <person name="Errington H."/>
            <person name="Frankish A."/>
            <person name="Frankland J."/>
            <person name="French L."/>
            <person name="Garner P."/>
            <person name="Garnett J."/>
            <person name="Gay L."/>
            <person name="Ghori M.R.J."/>
            <person name="Gibson R."/>
            <person name="Gilby L.M."/>
            <person name="Gillett W."/>
            <person name="Glithero R.J."/>
            <person name="Grafham D.V."/>
            <person name="Griffiths C."/>
            <person name="Griffiths-Jones S."/>
            <person name="Grocock R."/>
            <person name="Hammond S."/>
            <person name="Harrison E.S.I."/>
            <person name="Hart E."/>
            <person name="Haugen E."/>
            <person name="Heath P.D."/>
            <person name="Holmes S."/>
            <person name="Holt K."/>
            <person name="Howden P.J."/>
            <person name="Hunt A.R."/>
            <person name="Hunt S.E."/>
            <person name="Hunter G."/>
            <person name="Isherwood J."/>
            <person name="James R."/>
            <person name="Johnson C."/>
            <person name="Johnson D."/>
            <person name="Joy A."/>
            <person name="Kay M."/>
            <person name="Kershaw J.K."/>
            <person name="Kibukawa M."/>
            <person name="Kimberley A.M."/>
            <person name="King A."/>
            <person name="Knights A.J."/>
            <person name="Lad H."/>
            <person name="Laird G."/>
            <person name="Lawlor S."/>
            <person name="Leongamornlert D.A."/>
            <person name="Lloyd D.M."/>
            <person name="Loveland J."/>
            <person name="Lovell J."/>
            <person name="Lush M.J."/>
            <person name="Lyne R."/>
            <person name="Martin S."/>
            <person name="Mashreghi-Mohammadi M."/>
            <person name="Matthews L."/>
            <person name="Matthews N.S.W."/>
            <person name="McLaren S."/>
            <person name="Milne S."/>
            <person name="Mistry S."/>
            <person name="Moore M.J.F."/>
            <person name="Nickerson T."/>
            <person name="O'Dell C.N."/>
            <person name="Oliver K."/>
            <person name="Palmeiri A."/>
            <person name="Palmer S.A."/>
            <person name="Parker A."/>
            <person name="Patel D."/>
            <person name="Pearce A.V."/>
            <person name="Peck A.I."/>
            <person name="Pelan S."/>
            <person name="Phelps K."/>
            <person name="Phillimore B.J."/>
            <person name="Plumb R."/>
            <person name="Rajan J."/>
            <person name="Raymond C."/>
            <person name="Rouse G."/>
            <person name="Saenphimmachak C."/>
            <person name="Sehra H.K."/>
            <person name="Sheridan E."/>
            <person name="Shownkeen R."/>
            <person name="Sims S."/>
            <person name="Skuce C.D."/>
            <person name="Smith M."/>
            <person name="Steward C."/>
            <person name="Subramanian S."/>
            <person name="Sycamore N."/>
            <person name="Tracey A."/>
            <person name="Tromans A."/>
            <person name="Van Helmond Z."/>
            <person name="Wall M."/>
            <person name="Wallis J.M."/>
            <person name="White S."/>
            <person name="Whitehead S.L."/>
            <person name="Wilkinson J.E."/>
            <person name="Willey D.L."/>
            <person name="Williams H."/>
            <person name="Wilming L."/>
            <person name="Wray P.W."/>
            <person name="Wu Z."/>
            <person name="Coulson A."/>
            <person name="Vaudin M."/>
            <person name="Sulston J.E."/>
            <person name="Durbin R.M."/>
            <person name="Hubbard T."/>
            <person name="Wooster R."/>
            <person name="Dunham I."/>
            <person name="Carter N.P."/>
            <person name="McVean G."/>
            <person name="Ross M.T."/>
            <person name="Harrow J."/>
            <person name="Olson M.V."/>
            <person name="Beck S."/>
            <person name="Rogers J."/>
            <person name="Bentley D.R."/>
        </authorList>
    </citation>
    <scope>NUCLEOTIDE SEQUENCE [LARGE SCALE GENOMIC DNA]</scope>
</reference>
<reference key="4">
    <citation type="submission" date="2005-07" db="EMBL/GenBank/DDBJ databases">
        <authorList>
            <person name="Mural R.J."/>
            <person name="Istrail S."/>
            <person name="Sutton G.G."/>
            <person name="Florea L."/>
            <person name="Halpern A.L."/>
            <person name="Mobarry C.M."/>
            <person name="Lippert R."/>
            <person name="Walenz B."/>
            <person name="Shatkay H."/>
            <person name="Dew I."/>
            <person name="Miller J.R."/>
            <person name="Flanigan M.J."/>
            <person name="Edwards N.J."/>
            <person name="Bolanos R."/>
            <person name="Fasulo D."/>
            <person name="Halldorsson B.V."/>
            <person name="Hannenhalli S."/>
            <person name="Turner R."/>
            <person name="Yooseph S."/>
            <person name="Lu F."/>
            <person name="Nusskern D.R."/>
            <person name="Shue B.C."/>
            <person name="Zheng X.H."/>
            <person name="Zhong F."/>
            <person name="Delcher A.L."/>
            <person name="Huson D.H."/>
            <person name="Kravitz S.A."/>
            <person name="Mouchard L."/>
            <person name="Reinert K."/>
            <person name="Remington K.A."/>
            <person name="Clark A.G."/>
            <person name="Waterman M.S."/>
            <person name="Eichler E.E."/>
            <person name="Adams M.D."/>
            <person name="Hunkapiller M.W."/>
            <person name="Myers E.W."/>
            <person name="Venter J.C."/>
        </authorList>
    </citation>
    <scope>NUCLEOTIDE SEQUENCE [LARGE SCALE GENOMIC DNA]</scope>
</reference>
<reference key="5">
    <citation type="journal article" date="2004" name="Genome Res.">
        <title>The status, quality, and expansion of the NIH full-length cDNA project: the Mammalian Gene Collection (MGC).</title>
        <authorList>
            <consortium name="The MGC Project Team"/>
        </authorList>
    </citation>
    <scope>NUCLEOTIDE SEQUENCE [LARGE SCALE MRNA] (ISOFORM 1)</scope>
    <source>
        <tissue>Brain</tissue>
    </source>
</reference>
<reference key="6">
    <citation type="journal article" date="2013" name="J. Proteome Res.">
        <title>Toward a comprehensive characterization of a human cancer cell phosphoproteome.</title>
        <authorList>
            <person name="Zhou H."/>
            <person name="Di Palma S."/>
            <person name="Preisinger C."/>
            <person name="Peng M."/>
            <person name="Polat A.N."/>
            <person name="Heck A.J."/>
            <person name="Mohammed S."/>
        </authorList>
    </citation>
    <scope>PHOSPHORYLATION [LARGE SCALE ANALYSIS] AT TYR-108</scope>
    <scope>IDENTIFICATION BY MASS SPECTROMETRY [LARGE SCALE ANALYSIS]</scope>
    <source>
        <tissue>Erythroleukemia</tissue>
    </source>
</reference>
<sequence>MSTVDLARVGACILKHAVTGEAVELRSLWREHACVVAGLRRFGCVVCRWIAQDLSSLAGLLDQHGVRLVGVGPEALGLQEFLDGDYFAGELYLDESKQLYKELGFKRYNSLSILPAALGKPVRDVAAKAKAVGIQGNLSGDLLQSGGLLVVSKGGDKVLLHFVQKSPGDYVPKEHILQVLGISAEVCASDPPQCDREV</sequence>
<organism>
    <name type="scientific">Homo sapiens</name>
    <name type="common">Human</name>
    <dbReference type="NCBI Taxonomy" id="9606"/>
    <lineage>
        <taxon>Eukaryota</taxon>
        <taxon>Metazoa</taxon>
        <taxon>Chordata</taxon>
        <taxon>Craniata</taxon>
        <taxon>Vertebrata</taxon>
        <taxon>Euteleostomi</taxon>
        <taxon>Mammalia</taxon>
        <taxon>Eutheria</taxon>
        <taxon>Euarchontoglires</taxon>
        <taxon>Primates</taxon>
        <taxon>Haplorrhini</taxon>
        <taxon>Catarrhini</taxon>
        <taxon>Hominidae</taxon>
        <taxon>Homo</taxon>
    </lineage>
</organism>
<name>PXL2B_HUMAN</name>
<comment type="function">
    <text evidence="1">Catalyzes the reduction of prostaglandin-ethanolamide H(2) (prostamide H(2)) to prostamide F(2alpha) with NADPH as proton donor. Also able to reduce prostaglandin H(2) to prostaglandin F(2alpha) (By similarity).</text>
</comment>
<comment type="catalytic activity">
    <reaction evidence="1">
        <text>prostaglandin H2 + [thioredoxin]-dithiol = prostaglandin F2alpha + [thioredoxin]-disulfide</text>
        <dbReference type="Rhea" id="RHEA:28214"/>
        <dbReference type="Rhea" id="RHEA-COMP:10698"/>
        <dbReference type="Rhea" id="RHEA-COMP:10700"/>
        <dbReference type="ChEBI" id="CHEBI:29950"/>
        <dbReference type="ChEBI" id="CHEBI:50058"/>
        <dbReference type="ChEBI" id="CHEBI:57404"/>
        <dbReference type="ChEBI" id="CHEBI:57405"/>
        <dbReference type="EC" id="1.11.1.20"/>
    </reaction>
</comment>
<comment type="catalytic activity">
    <reaction evidence="1">
        <text>prostamide F2alpha + [thioredoxin]-disulfide = prostamide H2 + [thioredoxin]-dithiol</text>
        <dbReference type="Rhea" id="RHEA:26373"/>
        <dbReference type="Rhea" id="RHEA-COMP:10698"/>
        <dbReference type="Rhea" id="RHEA-COMP:10700"/>
        <dbReference type="ChEBI" id="CHEBI:29950"/>
        <dbReference type="ChEBI" id="CHEBI:50058"/>
        <dbReference type="ChEBI" id="CHEBI:53081"/>
        <dbReference type="ChEBI" id="CHEBI:53082"/>
        <dbReference type="EC" id="1.11.1.20"/>
    </reaction>
</comment>
<comment type="interaction">
    <interactant intactId="EBI-7280826">
        <id>Q8TBF2</id>
    </interactant>
    <interactant intactId="EBI-350590">
        <id>Q9UNS2</id>
        <label>COPS3</label>
    </interactant>
    <organismsDiffer>false</organismsDiffer>
    <experiments>5</experiments>
</comment>
<comment type="interaction">
    <interactant intactId="EBI-7280826">
        <id>Q8TBF2</id>
    </interactant>
    <interactant intactId="EBI-2555179">
        <id>Q9NUJ3</id>
        <label>TCP11L1</label>
    </interactant>
    <organismsDiffer>false</organismsDiffer>
    <experiments>6</experiments>
</comment>
<comment type="subcellular location">
    <subcellularLocation>
        <location evidence="1">Cytoplasm</location>
        <location evidence="1">Cytosol</location>
    </subcellularLocation>
</comment>
<comment type="alternative products">
    <event type="alternative splicing"/>
    <isoform>
        <id>Q8TBF2-1</id>
        <name>1</name>
        <sequence type="displayed"/>
    </isoform>
    <isoform>
        <id>Q8TBF2-2</id>
        <name>2</name>
        <sequence type="described" ref="VSP_024581"/>
    </isoform>
    <isoform>
        <id>Q8TBF2-3</id>
        <name>3</name>
        <sequence type="described" ref="VSP_040901"/>
    </isoform>
    <isoform>
        <id>Q8TBF2-4</id>
        <name>4</name>
        <sequence type="described" ref="VSP_040903"/>
    </isoform>
    <isoform>
        <id>Q8TBF2-6</id>
        <name>5</name>
        <sequence type="described" ref="VSP_040904"/>
    </isoform>
    <isoform>
        <id>Q8TBF2-7</id>
        <name>6</name>
        <sequence type="described" ref="VSP_040901 VSP_024581"/>
    </isoform>
</comment>
<comment type="similarity">
    <text evidence="3">Belongs to the peroxiredoxin-like PRXL2 family. Prostamide/prostaglandin F synthase subfamily.</text>
</comment>
<gene>
    <name evidence="4" type="primary">PRXL2B</name>
    <name type="synonym">C1orf93</name>
    <name evidence="4" type="synonym">FAM213B</name>
</gene>
<keyword id="KW-0025">Alternative splicing</keyword>
<keyword id="KW-0963">Cytoplasm</keyword>
<keyword id="KW-0275">Fatty acid biosynthesis</keyword>
<keyword id="KW-0276">Fatty acid metabolism</keyword>
<keyword id="KW-0444">Lipid biosynthesis</keyword>
<keyword id="KW-0443">Lipid metabolism</keyword>
<keyword id="KW-0521">NADP</keyword>
<keyword id="KW-0560">Oxidoreductase</keyword>
<keyword id="KW-0597">Phosphoprotein</keyword>
<keyword id="KW-0643">Prostaglandin biosynthesis</keyword>
<keyword id="KW-0644">Prostaglandin metabolism</keyword>
<keyword id="KW-1267">Proteomics identification</keyword>
<keyword id="KW-1185">Reference proteome</keyword>
<protein>
    <recommendedName>
        <fullName evidence="3">Prostamide/prostaglandin F synthase</fullName>
        <shortName>Prostamide/PG F synthase</shortName>
        <shortName>Prostamide/PGF synthase</shortName>
        <ecNumber evidence="1">1.11.1.20</ecNumber>
    </recommendedName>
    <alternativeName>
        <fullName evidence="3">Peroxiredoxin-like 2B</fullName>
    </alternativeName>
    <alternativeName>
        <fullName>Protein FAM213B</fullName>
    </alternativeName>
</protein>
<accession>Q8TBF2</accession>
<accession>A8K793</accession>
<accession>B3KPY3</accession>
<accession>B4DQR9</accession>
<accession>B4E0S5</accession>
<accession>B7ZAC8</accession>
<accession>B9DI90</accession>
<accession>B9DI92</accession>
<accession>J3KQD0</accession>
<accession>Q8N2H0</accession>